<sequence>MWNSGFESFSSSTYGGAGGYTQSPGGFGSPTPSQAEKKSRVRAQHIVPCTISQLLSATLTDEVFRIGDVEISQVTIVGIIRHAEKAPTNIVYKIDDMTAPPMDVRQWVDTDDASGENAVVPPETYVKVAGHLRSFQNKKSLVAFKIIPLEDMNEFTAHILEVVNSHMMLSKPNSQASAGRPSMSNPGMSEPGNFSGNNFMPANGLTVVQNQVLNLIKACPRPEGLNFQDLRSQLQHMPVPSIKQAVDFLCNEGHIYSTVDDDHFKSTDAE</sequence>
<name>RFA2_MOUSE</name>
<keyword id="KW-0007">Acetylation</keyword>
<keyword id="KW-0227">DNA damage</keyword>
<keyword id="KW-0233">DNA recombination</keyword>
<keyword id="KW-0234">DNA repair</keyword>
<keyword id="KW-0235">DNA replication</keyword>
<keyword id="KW-0238">DNA-binding</keyword>
<keyword id="KW-1017">Isopeptide bond</keyword>
<keyword id="KW-0539">Nucleus</keyword>
<keyword id="KW-0597">Phosphoprotein</keyword>
<keyword id="KW-1185">Reference proteome</keyword>
<keyword id="KW-0832">Ubl conjugation</keyword>
<reference key="1">
    <citation type="journal article" date="1991" name="Nucleic Acids Res.">
        <title>cDNA cloning of the murine 30-kDa protein homologous to the 32-kDa subunit of human replication protein A.</title>
        <authorList>
            <person name="Nakagawa M."/>
            <person name="Tsukada S."/>
            <person name="Soma T."/>
            <person name="Shimizu Y.K."/>
            <person name="Miyake S."/>
            <person name="Iwamatsu A."/>
            <person name="Sugiyama H."/>
        </authorList>
    </citation>
    <scope>NUCLEOTIDE SEQUENCE [MRNA]</scope>
</reference>
<reference key="2">
    <citation type="journal article" date="2005" name="Science">
        <title>The transcriptional landscape of the mammalian genome.</title>
        <authorList>
            <person name="Carninci P."/>
            <person name="Kasukawa T."/>
            <person name="Katayama S."/>
            <person name="Gough J."/>
            <person name="Frith M.C."/>
            <person name="Maeda N."/>
            <person name="Oyama R."/>
            <person name="Ravasi T."/>
            <person name="Lenhard B."/>
            <person name="Wells C."/>
            <person name="Kodzius R."/>
            <person name="Shimokawa K."/>
            <person name="Bajic V.B."/>
            <person name="Brenner S.E."/>
            <person name="Batalov S."/>
            <person name="Forrest A.R."/>
            <person name="Zavolan M."/>
            <person name="Davis M.J."/>
            <person name="Wilming L.G."/>
            <person name="Aidinis V."/>
            <person name="Allen J.E."/>
            <person name="Ambesi-Impiombato A."/>
            <person name="Apweiler R."/>
            <person name="Aturaliya R.N."/>
            <person name="Bailey T.L."/>
            <person name="Bansal M."/>
            <person name="Baxter L."/>
            <person name="Beisel K.W."/>
            <person name="Bersano T."/>
            <person name="Bono H."/>
            <person name="Chalk A.M."/>
            <person name="Chiu K.P."/>
            <person name="Choudhary V."/>
            <person name="Christoffels A."/>
            <person name="Clutterbuck D.R."/>
            <person name="Crowe M.L."/>
            <person name="Dalla E."/>
            <person name="Dalrymple B.P."/>
            <person name="de Bono B."/>
            <person name="Della Gatta G."/>
            <person name="di Bernardo D."/>
            <person name="Down T."/>
            <person name="Engstrom P."/>
            <person name="Fagiolini M."/>
            <person name="Faulkner G."/>
            <person name="Fletcher C.F."/>
            <person name="Fukushima T."/>
            <person name="Furuno M."/>
            <person name="Futaki S."/>
            <person name="Gariboldi M."/>
            <person name="Georgii-Hemming P."/>
            <person name="Gingeras T.R."/>
            <person name="Gojobori T."/>
            <person name="Green R.E."/>
            <person name="Gustincich S."/>
            <person name="Harbers M."/>
            <person name="Hayashi Y."/>
            <person name="Hensch T.K."/>
            <person name="Hirokawa N."/>
            <person name="Hill D."/>
            <person name="Huminiecki L."/>
            <person name="Iacono M."/>
            <person name="Ikeo K."/>
            <person name="Iwama A."/>
            <person name="Ishikawa T."/>
            <person name="Jakt M."/>
            <person name="Kanapin A."/>
            <person name="Katoh M."/>
            <person name="Kawasawa Y."/>
            <person name="Kelso J."/>
            <person name="Kitamura H."/>
            <person name="Kitano H."/>
            <person name="Kollias G."/>
            <person name="Krishnan S.P."/>
            <person name="Kruger A."/>
            <person name="Kummerfeld S.K."/>
            <person name="Kurochkin I.V."/>
            <person name="Lareau L.F."/>
            <person name="Lazarevic D."/>
            <person name="Lipovich L."/>
            <person name="Liu J."/>
            <person name="Liuni S."/>
            <person name="McWilliam S."/>
            <person name="Madan Babu M."/>
            <person name="Madera M."/>
            <person name="Marchionni L."/>
            <person name="Matsuda H."/>
            <person name="Matsuzawa S."/>
            <person name="Miki H."/>
            <person name="Mignone F."/>
            <person name="Miyake S."/>
            <person name="Morris K."/>
            <person name="Mottagui-Tabar S."/>
            <person name="Mulder N."/>
            <person name="Nakano N."/>
            <person name="Nakauchi H."/>
            <person name="Ng P."/>
            <person name="Nilsson R."/>
            <person name="Nishiguchi S."/>
            <person name="Nishikawa S."/>
            <person name="Nori F."/>
            <person name="Ohara O."/>
            <person name="Okazaki Y."/>
            <person name="Orlando V."/>
            <person name="Pang K.C."/>
            <person name="Pavan W.J."/>
            <person name="Pavesi G."/>
            <person name="Pesole G."/>
            <person name="Petrovsky N."/>
            <person name="Piazza S."/>
            <person name="Reed J."/>
            <person name="Reid J.F."/>
            <person name="Ring B.Z."/>
            <person name="Ringwald M."/>
            <person name="Rost B."/>
            <person name="Ruan Y."/>
            <person name="Salzberg S.L."/>
            <person name="Sandelin A."/>
            <person name="Schneider C."/>
            <person name="Schoenbach C."/>
            <person name="Sekiguchi K."/>
            <person name="Semple C.A."/>
            <person name="Seno S."/>
            <person name="Sessa L."/>
            <person name="Sheng Y."/>
            <person name="Shibata Y."/>
            <person name="Shimada H."/>
            <person name="Shimada K."/>
            <person name="Silva D."/>
            <person name="Sinclair B."/>
            <person name="Sperling S."/>
            <person name="Stupka E."/>
            <person name="Sugiura K."/>
            <person name="Sultana R."/>
            <person name="Takenaka Y."/>
            <person name="Taki K."/>
            <person name="Tammoja K."/>
            <person name="Tan S.L."/>
            <person name="Tang S."/>
            <person name="Taylor M.S."/>
            <person name="Tegner J."/>
            <person name="Teichmann S.A."/>
            <person name="Ueda H.R."/>
            <person name="van Nimwegen E."/>
            <person name="Verardo R."/>
            <person name="Wei C.L."/>
            <person name="Yagi K."/>
            <person name="Yamanishi H."/>
            <person name="Zabarovsky E."/>
            <person name="Zhu S."/>
            <person name="Zimmer A."/>
            <person name="Hide W."/>
            <person name="Bult C."/>
            <person name="Grimmond S.M."/>
            <person name="Teasdale R.D."/>
            <person name="Liu E.T."/>
            <person name="Brusic V."/>
            <person name="Quackenbush J."/>
            <person name="Wahlestedt C."/>
            <person name="Mattick J.S."/>
            <person name="Hume D.A."/>
            <person name="Kai C."/>
            <person name="Sasaki D."/>
            <person name="Tomaru Y."/>
            <person name="Fukuda S."/>
            <person name="Kanamori-Katayama M."/>
            <person name="Suzuki M."/>
            <person name="Aoki J."/>
            <person name="Arakawa T."/>
            <person name="Iida J."/>
            <person name="Imamura K."/>
            <person name="Itoh M."/>
            <person name="Kato T."/>
            <person name="Kawaji H."/>
            <person name="Kawagashira N."/>
            <person name="Kawashima T."/>
            <person name="Kojima M."/>
            <person name="Kondo S."/>
            <person name="Konno H."/>
            <person name="Nakano K."/>
            <person name="Ninomiya N."/>
            <person name="Nishio T."/>
            <person name="Okada M."/>
            <person name="Plessy C."/>
            <person name="Shibata K."/>
            <person name="Shiraki T."/>
            <person name="Suzuki S."/>
            <person name="Tagami M."/>
            <person name="Waki K."/>
            <person name="Watahiki A."/>
            <person name="Okamura-Oho Y."/>
            <person name="Suzuki H."/>
            <person name="Kawai J."/>
            <person name="Hayashizaki Y."/>
        </authorList>
    </citation>
    <scope>NUCLEOTIDE SEQUENCE [LARGE SCALE MRNA]</scope>
    <source>
        <strain>C57BL/6J</strain>
        <tissue>Liver</tissue>
        <tissue>Thymus</tissue>
    </source>
</reference>
<reference key="3">
    <citation type="journal article" date="2009" name="PLoS Biol.">
        <title>Lineage-specific biology revealed by a finished genome assembly of the mouse.</title>
        <authorList>
            <person name="Church D.M."/>
            <person name="Goodstadt L."/>
            <person name="Hillier L.W."/>
            <person name="Zody M.C."/>
            <person name="Goldstein S."/>
            <person name="She X."/>
            <person name="Bult C.J."/>
            <person name="Agarwala R."/>
            <person name="Cherry J.L."/>
            <person name="DiCuccio M."/>
            <person name="Hlavina W."/>
            <person name="Kapustin Y."/>
            <person name="Meric P."/>
            <person name="Maglott D."/>
            <person name="Birtle Z."/>
            <person name="Marques A.C."/>
            <person name="Graves T."/>
            <person name="Zhou S."/>
            <person name="Teague B."/>
            <person name="Potamousis K."/>
            <person name="Churas C."/>
            <person name="Place M."/>
            <person name="Herschleb J."/>
            <person name="Runnheim R."/>
            <person name="Forrest D."/>
            <person name="Amos-Landgraf J."/>
            <person name="Schwartz D.C."/>
            <person name="Cheng Z."/>
            <person name="Lindblad-Toh K."/>
            <person name="Eichler E.E."/>
            <person name="Ponting C.P."/>
        </authorList>
    </citation>
    <scope>NUCLEOTIDE SEQUENCE [LARGE SCALE GENOMIC DNA]</scope>
    <source>
        <strain>C57BL/6J</strain>
    </source>
</reference>
<reference key="4">
    <citation type="journal article" date="2007" name="J. Mol. Biol.">
        <title>Mammalian TIMELESS and Tipin are evolutionarily conserved replication fork-associated factors.</title>
        <authorList>
            <person name="Gotter A.L."/>
            <person name="Suppa C."/>
            <person name="Emanuel B.S."/>
        </authorList>
    </citation>
    <scope>INTERACTION WITH TIMELESS AND TIPIN</scope>
</reference>
<reference key="5">
    <citation type="journal article" date="2010" name="Cell">
        <title>A tissue-specific atlas of mouse protein phosphorylation and expression.</title>
        <authorList>
            <person name="Huttlin E.L."/>
            <person name="Jedrychowski M.P."/>
            <person name="Elias J.E."/>
            <person name="Goswami T."/>
            <person name="Rad R."/>
            <person name="Beausoleil S.A."/>
            <person name="Villen J."/>
            <person name="Haas W."/>
            <person name="Sowa M.E."/>
            <person name="Gygi S.P."/>
        </authorList>
    </citation>
    <scope>IDENTIFICATION BY MASS SPECTROMETRY [LARGE SCALE ANALYSIS]</scope>
    <source>
        <tissue>Brain</tissue>
        <tissue>Liver</tissue>
        <tissue>Spleen</tissue>
        <tissue>Testis</tissue>
    </source>
</reference>
<comment type="function">
    <text evidence="2">As part of the heterotrimeric replication protein A complex (RPA/RP-A), binds and stabilizes single-stranded DNA intermediates, that form during DNA replication or upon DNA stress. It prevents their reannealing and in parallel, recruits and activates different proteins and complexes involved in DNA metabolism. Thereby, it plays an essential role both in DNA replication and the cellular response to DNA damage. In the cellular response to DNA damage, the RPA complex controls DNA repair and DNA damage checkpoint activation. Through recruitment of ATRIP activates the ATR kinase a master regulator of the DNA damage response. It is required for the recruitment of the DNA double-strand break repair factors RAD51 and RAD52 to chromatin in response to DNA damage. Also recruits to sites of DNA damage proteins like XPA and XPG that are involved in nucleotide excision repair and is required for this mechanism of DNA repair. Also plays a role in base excision repair (BER) probably through interaction with UNG. Also recruits SMARCAL1/HARP, which is involved in replication fork restart, to sites of DNA damage. May also play a role in telomere maintenance.</text>
</comment>
<comment type="subunit">
    <text evidence="2">Component of the replication protein A complex (RPA/RP-A), a heterotrimeric complex composed of RPA1, RPA2 and RPA3. Interacts with PRPF19; the PRP19-CDC5L complex is recruited to the sites of DNA repair where it ubiquitinates the replication protein A complex (RPA) (By similarity). Interacts with SERTAD3. Interacts with TIPIN (PubMed:17141802). Interacts with TIMELESS (PubMed:17141802). Interacts with PPP4R2; the interaction is direct, DNA damage-dependent and mediates the recruitment of the PP4 catalytic subunit PPP4C (By similarity). Interacts (hyperphosphorylated) with RAD51 (By similarity). Interacts with SMARCAL1; the interaction is direct and mediates the recruitment to the RPA complex of SMARCAL1 (By similarity). Interacts with RAD52 and XPA; those interactions are direct and associate RAD52 and XPA to the RPA complex (By similarity). Interacts with FBH1 (By similarity). Interacts with ETAA1; the interaction is direct and promotes ETAA1 recruitment at stalled replication forks (By similarity). Interacts with DDI2 (By similarity). Interacts (in unphosphorylated form via N-terminus) with EIF4EBP3; the interaction enhances EIF4EBP3-mediated inhibition of EIF4E-mediated mRNA nuclear export (By similarity). Interacts with nuclear UNG (isoform 2); this interaction mediates UNG recruitment to RPA-coated single-stranded DNA at stalled replication forks.</text>
</comment>
<comment type="subcellular location">
    <subcellularLocation>
        <location evidence="2">Nucleus</location>
    </subcellularLocation>
    <subcellularLocation>
        <location evidence="2">Nucleus</location>
        <location evidence="2">PML body</location>
    </subcellularLocation>
    <text evidence="2 4">Redistributes to discrete nuclear foci upon DNA damage in an ATR-dependent manner.</text>
</comment>
<comment type="PTM">
    <text evidence="2">Differentially phosphorylated throughout the cell cycle, becoming phosphorylated at the G1-S transition and dephosphorylated in late mitosis. Mainly phosphorylated at Ser-23 and Ser-29, by cyclin A-CDK2 and cyclin B-CDK1, respectively during DNA replication and mitosis. Dephosphorylation may require the serine/threonine-protein phosphatase 4. Phosphorylation at Ser-23 and Ser-29 is a prerequisite for further phosphorylation. Becomes hyperphosphorylated on additional residues including Ser-4, Ser-8, Thr-21 and Ser-33 in response to DNA damage. Hyperphosphorylation is mediated by ATM, ATR and PRKDC. Primarily recruited to DNA repair nuclear foci as a hypophosphorylated form it undergoes subsequent hyperphosphorylation, catalyzed by ATR. Hyperphosphorylation is required for RAD51 recruitment to chromatin and efficient DNA repair. Phosphorylation at Thr-21 depends upon RFWD3 presence.</text>
</comment>
<comment type="PTM">
    <text evidence="2">DNA damage-induced 'Lys-63'-linked polyubiquitination by PRPF19 mediates ATRIP recruitment to the RPA complex at sites of DNA damage and activation of ATR. Ubiquitinated by RFWD3 at stalled replication forks in response to DNA damage: ubiquitination by RFWD3 does not lead to degradation by the proteasome and promotes removal of the RPA complex from stalled replication forks, promoting homologous recombination.</text>
</comment>
<comment type="similarity">
    <text evidence="5">Belongs to the replication factor A protein 2 family.</text>
</comment>
<dbReference type="EMBL" id="D00812">
    <property type="protein sequence ID" value="BAA00693.1"/>
    <property type="molecule type" value="mRNA"/>
</dbReference>
<dbReference type="EMBL" id="AK168680">
    <property type="protein sequence ID" value="BAE40529.1"/>
    <property type="molecule type" value="mRNA"/>
</dbReference>
<dbReference type="EMBL" id="AK169847">
    <property type="protein sequence ID" value="BAE41408.1"/>
    <property type="molecule type" value="mRNA"/>
</dbReference>
<dbReference type="EMBL" id="AL627130">
    <property type="status" value="NOT_ANNOTATED_CDS"/>
    <property type="molecule type" value="Genomic_DNA"/>
</dbReference>
<dbReference type="CCDS" id="CCDS18734.1"/>
<dbReference type="PIR" id="S28682">
    <property type="entry name" value="S28682"/>
</dbReference>
<dbReference type="RefSeq" id="NP_035414.3">
    <property type="nucleotide sequence ID" value="NM_011284.3"/>
</dbReference>
<dbReference type="EMDB" id="EMD-2789"/>
<dbReference type="SMR" id="Q62193"/>
<dbReference type="CORUM" id="Q62193"/>
<dbReference type="DIP" id="DIP-48715N"/>
<dbReference type="FunCoup" id="Q62193">
    <property type="interactions" value="2962"/>
</dbReference>
<dbReference type="IntAct" id="Q62193">
    <property type="interactions" value="2"/>
</dbReference>
<dbReference type="STRING" id="10090.ENSMUSP00000099621"/>
<dbReference type="GlyGen" id="Q62193">
    <property type="glycosylation" value="1 site"/>
</dbReference>
<dbReference type="iPTMnet" id="Q62193"/>
<dbReference type="PhosphoSitePlus" id="Q62193"/>
<dbReference type="jPOST" id="Q62193"/>
<dbReference type="PaxDb" id="10090-ENSMUSP00000099621"/>
<dbReference type="PeptideAtlas" id="Q62193"/>
<dbReference type="ProteomicsDB" id="253119"/>
<dbReference type="ProteomicsDB" id="332781"/>
<dbReference type="Pumba" id="Q62193"/>
<dbReference type="Antibodypedia" id="4296">
    <property type="antibodies" value="946 antibodies from 44 providers"/>
</dbReference>
<dbReference type="DNASU" id="19891"/>
<dbReference type="Ensembl" id="ENSMUST00000102561.11">
    <property type="protein sequence ID" value="ENSMUSP00000099621.5"/>
    <property type="gene ID" value="ENSMUSG00000028884.15"/>
</dbReference>
<dbReference type="GeneID" id="19891"/>
<dbReference type="KEGG" id="mmu:19891"/>
<dbReference type="AGR" id="MGI:1339939"/>
<dbReference type="CTD" id="6118"/>
<dbReference type="MGI" id="MGI:1339939">
    <property type="gene designation" value="Rpa2"/>
</dbReference>
<dbReference type="VEuPathDB" id="HostDB:ENSMUSG00000028884"/>
<dbReference type="eggNOG" id="KOG3108">
    <property type="taxonomic scope" value="Eukaryota"/>
</dbReference>
<dbReference type="GeneTree" id="ENSGT00390000010045"/>
<dbReference type="HOGENOM" id="CLU_051033_1_0_1"/>
<dbReference type="InParanoid" id="Q62193"/>
<dbReference type="OMA" id="SFGNKRY"/>
<dbReference type="OrthoDB" id="25571at2759"/>
<dbReference type="PhylomeDB" id="Q62193"/>
<dbReference type="TreeFam" id="TF105242"/>
<dbReference type="Reactome" id="R-MMU-110312">
    <property type="pathway name" value="Translesion synthesis by REV1"/>
</dbReference>
<dbReference type="Reactome" id="R-MMU-110314">
    <property type="pathway name" value="Recognition of DNA damage by PCNA-containing replication complex"/>
</dbReference>
<dbReference type="Reactome" id="R-MMU-110320">
    <property type="pathway name" value="Translesion Synthesis by POLH"/>
</dbReference>
<dbReference type="Reactome" id="R-MMU-174437">
    <property type="pathway name" value="Removal of the Flap Intermediate from the C-strand"/>
</dbReference>
<dbReference type="Reactome" id="R-MMU-176187">
    <property type="pathway name" value="Activation of ATR in response to replication stress"/>
</dbReference>
<dbReference type="Reactome" id="R-MMU-3371453">
    <property type="pathway name" value="Regulation of HSF1-mediated heat shock response"/>
</dbReference>
<dbReference type="Reactome" id="R-MMU-5358565">
    <property type="pathway name" value="Mismatch repair (MMR) directed by MSH2:MSH6 (MutSalpha)"/>
</dbReference>
<dbReference type="Reactome" id="R-MMU-5358606">
    <property type="pathway name" value="Mismatch repair (MMR) directed by MSH2:MSH3 (MutSbeta)"/>
</dbReference>
<dbReference type="Reactome" id="R-MMU-5651801">
    <property type="pathway name" value="PCNA-Dependent Long Patch Base Excision Repair"/>
</dbReference>
<dbReference type="Reactome" id="R-MMU-5655862">
    <property type="pathway name" value="Translesion synthesis by POLK"/>
</dbReference>
<dbReference type="Reactome" id="R-MMU-5656121">
    <property type="pathway name" value="Translesion synthesis by POLI"/>
</dbReference>
<dbReference type="Reactome" id="R-MMU-5656169">
    <property type="pathway name" value="Termination of translesion DNA synthesis"/>
</dbReference>
<dbReference type="Reactome" id="R-MMU-5685938">
    <property type="pathway name" value="HDR through Single Strand Annealing (SSA)"/>
</dbReference>
<dbReference type="Reactome" id="R-MMU-5685942">
    <property type="pathway name" value="HDR through Homologous Recombination (HRR)"/>
</dbReference>
<dbReference type="Reactome" id="R-MMU-5693607">
    <property type="pathway name" value="Processing of DNA double-strand break ends"/>
</dbReference>
<dbReference type="Reactome" id="R-MMU-5696395">
    <property type="pathway name" value="Formation of Incision Complex in GG-NER"/>
</dbReference>
<dbReference type="Reactome" id="R-MMU-5696397">
    <property type="pathway name" value="Gap-filling DNA repair synthesis and ligation in GG-NER"/>
</dbReference>
<dbReference type="Reactome" id="R-MMU-5696400">
    <property type="pathway name" value="Dual Incision in GG-NER"/>
</dbReference>
<dbReference type="Reactome" id="R-MMU-6782135">
    <property type="pathway name" value="Dual incision in TC-NER"/>
</dbReference>
<dbReference type="Reactome" id="R-MMU-6782210">
    <property type="pathway name" value="Gap-filling DNA repair synthesis and ligation in TC-NER"/>
</dbReference>
<dbReference type="Reactome" id="R-MMU-6783310">
    <property type="pathway name" value="Fanconi Anemia Pathway"/>
</dbReference>
<dbReference type="Reactome" id="R-MMU-6804756">
    <property type="pathway name" value="Regulation of TP53 Activity through Phosphorylation"/>
</dbReference>
<dbReference type="Reactome" id="R-MMU-68962">
    <property type="pathway name" value="Activation of the pre-replicative complex"/>
</dbReference>
<dbReference type="Reactome" id="R-MMU-69166">
    <property type="pathway name" value="Removal of the Flap Intermediate"/>
</dbReference>
<dbReference type="Reactome" id="R-MMU-69473">
    <property type="pathway name" value="G2/M DNA damage checkpoint"/>
</dbReference>
<dbReference type="BioGRID-ORCS" id="19891">
    <property type="hits" value="26 hits in 112 CRISPR screens"/>
</dbReference>
<dbReference type="ChiTaRS" id="Rpa2">
    <property type="organism name" value="mouse"/>
</dbReference>
<dbReference type="PRO" id="PR:Q62193"/>
<dbReference type="Proteomes" id="UP000000589">
    <property type="component" value="Chromosome 4"/>
</dbReference>
<dbReference type="RNAct" id="Q62193">
    <property type="molecule type" value="protein"/>
</dbReference>
<dbReference type="Bgee" id="ENSMUSG00000028884">
    <property type="expression patterns" value="Expressed in somite and 262 other cell types or tissues"/>
</dbReference>
<dbReference type="GO" id="GO:0000785">
    <property type="term" value="C:chromatin"/>
    <property type="evidence" value="ECO:0007669"/>
    <property type="project" value="Ensembl"/>
</dbReference>
<dbReference type="GO" id="GO:0000781">
    <property type="term" value="C:chromosome, telomeric region"/>
    <property type="evidence" value="ECO:0007669"/>
    <property type="project" value="Ensembl"/>
</dbReference>
<dbReference type="GO" id="GO:0005662">
    <property type="term" value="C:DNA replication factor A complex"/>
    <property type="evidence" value="ECO:0000250"/>
    <property type="project" value="UniProtKB"/>
</dbReference>
<dbReference type="GO" id="GO:0005654">
    <property type="term" value="C:nucleoplasm"/>
    <property type="evidence" value="ECO:0000304"/>
    <property type="project" value="Reactome"/>
</dbReference>
<dbReference type="GO" id="GO:0005634">
    <property type="term" value="C:nucleus"/>
    <property type="evidence" value="ECO:0000250"/>
    <property type="project" value="UniProtKB"/>
</dbReference>
<dbReference type="GO" id="GO:0016605">
    <property type="term" value="C:PML body"/>
    <property type="evidence" value="ECO:0000250"/>
    <property type="project" value="UniProtKB"/>
</dbReference>
<dbReference type="GO" id="GO:0035861">
    <property type="term" value="C:site of double-strand break"/>
    <property type="evidence" value="ECO:0007669"/>
    <property type="project" value="Ensembl"/>
</dbReference>
<dbReference type="GO" id="GO:0003684">
    <property type="term" value="F:damaged DNA binding"/>
    <property type="evidence" value="ECO:0000250"/>
    <property type="project" value="UniProtKB"/>
</dbReference>
<dbReference type="GO" id="GO:0003677">
    <property type="term" value="F:DNA binding"/>
    <property type="evidence" value="ECO:0000314"/>
    <property type="project" value="MGI"/>
</dbReference>
<dbReference type="GO" id="GO:0098505">
    <property type="term" value="F:G-rich strand telomeric DNA binding"/>
    <property type="evidence" value="ECO:0007669"/>
    <property type="project" value="Ensembl"/>
</dbReference>
<dbReference type="GO" id="GO:0019903">
    <property type="term" value="F:protein phosphatase binding"/>
    <property type="evidence" value="ECO:0007669"/>
    <property type="project" value="Ensembl"/>
</dbReference>
<dbReference type="GO" id="GO:0003697">
    <property type="term" value="F:single-stranded DNA binding"/>
    <property type="evidence" value="ECO:0000250"/>
    <property type="project" value="UniProtKB"/>
</dbReference>
<dbReference type="GO" id="GO:0031625">
    <property type="term" value="F:ubiquitin protein ligase binding"/>
    <property type="evidence" value="ECO:0007669"/>
    <property type="project" value="Ensembl"/>
</dbReference>
<dbReference type="GO" id="GO:0006284">
    <property type="term" value="P:base-excision repair"/>
    <property type="evidence" value="ECO:0000250"/>
    <property type="project" value="UniProtKB"/>
</dbReference>
<dbReference type="GO" id="GO:0006260">
    <property type="term" value="P:DNA replication"/>
    <property type="evidence" value="ECO:0000250"/>
    <property type="project" value="UniProtKB"/>
</dbReference>
<dbReference type="GO" id="GO:0000724">
    <property type="term" value="P:double-strand break repair via homologous recombination"/>
    <property type="evidence" value="ECO:0000250"/>
    <property type="project" value="UniProtKB"/>
</dbReference>
<dbReference type="GO" id="GO:0006298">
    <property type="term" value="P:mismatch repair"/>
    <property type="evidence" value="ECO:0000250"/>
    <property type="project" value="UniProtKB"/>
</dbReference>
<dbReference type="GO" id="GO:0031571">
    <property type="term" value="P:mitotic G1 DNA damage checkpoint signaling"/>
    <property type="evidence" value="ECO:0007669"/>
    <property type="project" value="Ensembl"/>
</dbReference>
<dbReference type="GO" id="GO:0006289">
    <property type="term" value="P:nucleotide-excision repair"/>
    <property type="evidence" value="ECO:0000250"/>
    <property type="project" value="UniProtKB"/>
</dbReference>
<dbReference type="GO" id="GO:0034502">
    <property type="term" value="P:protein localization to chromosome"/>
    <property type="evidence" value="ECO:0000250"/>
    <property type="project" value="UniProtKB"/>
</dbReference>
<dbReference type="GO" id="GO:2000001">
    <property type="term" value="P:regulation of DNA damage checkpoint"/>
    <property type="evidence" value="ECO:0000250"/>
    <property type="project" value="UniProtKB"/>
</dbReference>
<dbReference type="GO" id="GO:0010569">
    <property type="term" value="P:regulation of double-strand break repair via homologous recombination"/>
    <property type="evidence" value="ECO:0000250"/>
    <property type="project" value="UniProtKB"/>
</dbReference>
<dbReference type="GO" id="GO:0000723">
    <property type="term" value="P:telomere maintenance"/>
    <property type="evidence" value="ECO:0000250"/>
    <property type="project" value="UniProtKB"/>
</dbReference>
<dbReference type="CDD" id="cd04478">
    <property type="entry name" value="RPA2_DBD_D"/>
    <property type="match status" value="1"/>
</dbReference>
<dbReference type="FunFam" id="1.10.10.10:FF:000168">
    <property type="entry name" value="Replication protein A 32 kDa subunit"/>
    <property type="match status" value="1"/>
</dbReference>
<dbReference type="FunFam" id="2.40.50.140:FF:000149">
    <property type="entry name" value="Replication protein A 32 kDa subunit"/>
    <property type="match status" value="1"/>
</dbReference>
<dbReference type="Gene3D" id="2.40.50.140">
    <property type="entry name" value="Nucleic acid-binding proteins"/>
    <property type="match status" value="1"/>
</dbReference>
<dbReference type="Gene3D" id="1.10.10.10">
    <property type="entry name" value="Winged helix-like DNA-binding domain superfamily/Winged helix DNA-binding domain"/>
    <property type="match status" value="1"/>
</dbReference>
<dbReference type="InterPro" id="IPR012340">
    <property type="entry name" value="NA-bd_OB-fold"/>
</dbReference>
<dbReference type="InterPro" id="IPR040260">
    <property type="entry name" value="RFA2-like"/>
</dbReference>
<dbReference type="InterPro" id="IPR014646">
    <property type="entry name" value="Rfa2/RPA32"/>
</dbReference>
<dbReference type="InterPro" id="IPR014892">
    <property type="entry name" value="RPA_C"/>
</dbReference>
<dbReference type="InterPro" id="IPR036388">
    <property type="entry name" value="WH-like_DNA-bd_sf"/>
</dbReference>
<dbReference type="InterPro" id="IPR036390">
    <property type="entry name" value="WH_DNA-bd_sf"/>
</dbReference>
<dbReference type="PANTHER" id="PTHR13989:SF54">
    <property type="entry name" value="REPLICATION PROTEIN A 32 KDA SUBUNIT"/>
    <property type="match status" value="1"/>
</dbReference>
<dbReference type="PANTHER" id="PTHR13989">
    <property type="entry name" value="REPLICATION PROTEIN A-RELATED"/>
    <property type="match status" value="1"/>
</dbReference>
<dbReference type="Pfam" id="PF08784">
    <property type="entry name" value="RPA_C"/>
    <property type="match status" value="1"/>
</dbReference>
<dbReference type="PIRSF" id="PIRSF036949">
    <property type="entry name" value="RPA32"/>
    <property type="match status" value="1"/>
</dbReference>
<dbReference type="SUPFAM" id="SSF50249">
    <property type="entry name" value="Nucleic acid-binding proteins"/>
    <property type="match status" value="1"/>
</dbReference>
<dbReference type="SUPFAM" id="SSF46785">
    <property type="entry name" value="Winged helix' DNA-binding domain"/>
    <property type="match status" value="1"/>
</dbReference>
<accession>Q62193</accession>
<accession>Q3TE40</accession>
<proteinExistence type="evidence at protein level"/>
<feature type="chain" id="PRO_0000097271" description="Replication protein A 32 kDa subunit">
    <location>
        <begin position="1"/>
        <end position="270"/>
    </location>
</feature>
<feature type="DNA-binding region" description="OB">
    <location>
        <begin position="74"/>
        <end position="148"/>
    </location>
</feature>
<feature type="region of interest" description="Disordered" evidence="3">
    <location>
        <begin position="20"/>
        <end position="41"/>
    </location>
</feature>
<feature type="region of interest" description="Disordered" evidence="3">
    <location>
        <begin position="171"/>
        <end position="192"/>
    </location>
</feature>
<feature type="region of interest" description="Interaction with RAD52, TIPIN, UNG and XPA" evidence="1">
    <location>
        <begin position="187"/>
        <end position="270"/>
    </location>
</feature>
<feature type="modified residue" description="N-acetylmethionine" evidence="2">
    <location>
        <position position="1"/>
    </location>
</feature>
<feature type="modified residue" description="Phosphoserine; by PRKDC" evidence="2">
    <location>
        <position position="4"/>
    </location>
</feature>
<feature type="modified residue" description="Phosphoserine; by PRKDC" evidence="2">
    <location>
        <position position="8"/>
    </location>
</feature>
<feature type="modified residue" description="Phosphothreonine; by PRKDC" evidence="2">
    <location>
        <position position="21"/>
    </location>
</feature>
<feature type="modified residue" description="Phosphoserine; by CDK2" evidence="2">
    <location>
        <position position="23"/>
    </location>
</feature>
<feature type="modified residue" description="Phosphoserine; by CDK1" evidence="2">
    <location>
        <position position="29"/>
    </location>
</feature>
<feature type="modified residue" description="Phosphoserine; by PRKDC" evidence="2">
    <location>
        <position position="33"/>
    </location>
</feature>
<feature type="cross-link" description="Glycyl lysine isopeptide (Lys-Gly) (interchain with G-Cter in ubiquitin)" evidence="2">
    <location>
        <position position="37"/>
    </location>
</feature>
<feature type="cross-link" description="Glycyl lysine isopeptide (Lys-Gly) (interchain with G-Cter in ubiquitin)" evidence="2">
    <location>
        <position position="38"/>
    </location>
</feature>
<feature type="sequence conflict" description="In Ref. 1; BAA00693." evidence="5" ref="1">
    <original>S</original>
    <variation>T</variation>
    <location>
        <position position="10"/>
    </location>
</feature>
<feature type="sequence conflict" description="In Ref. 1; BAA00693." evidence="5" ref="1">
    <original>A</original>
    <variation>R</variation>
    <location>
        <position position="17"/>
    </location>
</feature>
<feature type="sequence conflict" description="In Ref. 1; BAA00693." evidence="5" ref="1">
    <original>PG</original>
    <variation>SF</variation>
    <location>
        <begin position="191"/>
        <end position="192"/>
    </location>
</feature>
<feature type="sequence conflict" description="In Ref. 1; BAA00693." evidence="5" ref="1">
    <original>G</original>
    <variation>R</variation>
    <location>
        <position position="204"/>
    </location>
</feature>
<gene>
    <name evidence="6" type="primary">Rpa2</name>
    <name type="synonym">Rpa34</name>
</gene>
<evidence type="ECO:0000250" key="1"/>
<evidence type="ECO:0000250" key="2">
    <source>
        <dbReference type="UniProtKB" id="P15927"/>
    </source>
</evidence>
<evidence type="ECO:0000256" key="3">
    <source>
        <dbReference type="SAM" id="MobiDB-lite"/>
    </source>
</evidence>
<evidence type="ECO:0000269" key="4">
    <source>
    </source>
</evidence>
<evidence type="ECO:0000305" key="5"/>
<evidence type="ECO:0000312" key="6">
    <source>
        <dbReference type="MGI" id="MGI:1339939"/>
    </source>
</evidence>
<organism>
    <name type="scientific">Mus musculus</name>
    <name type="common">Mouse</name>
    <dbReference type="NCBI Taxonomy" id="10090"/>
    <lineage>
        <taxon>Eukaryota</taxon>
        <taxon>Metazoa</taxon>
        <taxon>Chordata</taxon>
        <taxon>Craniata</taxon>
        <taxon>Vertebrata</taxon>
        <taxon>Euteleostomi</taxon>
        <taxon>Mammalia</taxon>
        <taxon>Eutheria</taxon>
        <taxon>Euarchontoglires</taxon>
        <taxon>Glires</taxon>
        <taxon>Rodentia</taxon>
        <taxon>Myomorpha</taxon>
        <taxon>Muroidea</taxon>
        <taxon>Muridae</taxon>
        <taxon>Murinae</taxon>
        <taxon>Mus</taxon>
        <taxon>Mus</taxon>
    </lineage>
</organism>
<protein>
    <recommendedName>
        <fullName evidence="5">Replication protein A 32 kDa subunit</fullName>
        <shortName>RP-A p32</shortName>
    </recommendedName>
    <alternativeName>
        <fullName>Replication factor A protein 2</fullName>
        <shortName>RF-A protein 2</shortName>
    </alternativeName>
    <alternativeName>
        <fullName>Replication protein A 34 kDa subunit</fullName>
        <shortName>RP-A p34</shortName>
    </alternativeName>
</protein>